<feature type="chain" id="PRO_0000454387" description="Protein rotatin homolog">
    <location>
        <begin position="1"/>
        <end position="1977"/>
    </location>
</feature>
<feature type="region of interest" description="Disordered" evidence="1">
    <location>
        <begin position="141"/>
        <end position="166"/>
    </location>
</feature>
<evidence type="ECO:0000256" key="1">
    <source>
        <dbReference type="SAM" id="MobiDB-lite"/>
    </source>
</evidence>
<evidence type="ECO:0000269" key="2">
    <source>
    </source>
</evidence>
<evidence type="ECO:0000269" key="3">
    <source>
    </source>
</evidence>
<evidence type="ECO:0000305" key="4"/>
<evidence type="ECO:0000312" key="5">
    <source>
        <dbReference type="FlyBase" id="FBgn0266111"/>
    </source>
</evidence>
<sequence length="1977" mass="225556">MSTKQSPALQLAEGQLTKLTSESEEIRMRALDQIETRFIRCLQLGEPIQFKPVLLLKQLIRWFGYTPPLVPDRVLAMIMELLRSEYAEAVIRKIPYERFKAELQKVRRVLHKQESKRVSELLDDMNLLLLEKYNIDRVTPSVSSLSSNDIPSQATESADSSSNQIYDNLKPEDYEPSWSHPCLDDVATMKSMIDLPRNSVELQLQLTELIIRMGDYPTEYFLQPPFVFLHLVQLQTMTDGSLIHVNRALIACLRLLQQRILLRRNTLSYADRFDPPSRPKQVKVVSALVILLENCMKLIRPLLFSCTNDNWHIMELIVEIVRTHDVLSSKIPLVSITLIADAVKSLLAYCNSVEGSCMTQLMDSLRIPRLQSLILNGVLHDMVALNINYDKRMDRRQAKALIQPIVLDSAYLSGMPERMKSLNTLISSLDSGPSPDEELIKLKRAYSVALNQLHPNTELTGSLLIQKYRQVCLVLVQLGSETLVKQLFGAVVKCIPFYAGNLKLRKDADELLYTLVDLPALKLRSLIYRLMIKSTVAHFHSFMNKTVYMTGCSNVDLIRQHILGVPLTPLLLRRMIIQSSEANTSERMQQWCLDYPIMIMKLNAILAPQDFSVVFPLLLPVLPLLISRSVTHKILHNVIWNVLEPDSSRLDPQLMLRGYVYFMFHPDGEVRSEATTTIAYVLQCQEQTNRYLPTASNVPVEHIANDLCIIQPPFCYRSIFIKCSDERFQGQRSLDALFRLLQAKDIKSNIRKSTMTQLNVLLRNWRACEEFSTKEDGYRLIMESLHNALKKGNDTDILLPTVSILMKLLFNDDEFRLEVANTFGVYTLLLRALFLFPHLEQLRQDVSICLFQMLFQNCITSTEDKLVLNANMEPLILPVTYEIEHKVIPTAVTEGLELQQNVEATHFGRDRAKAAQHWRLYMAYRVCQVPSSITLESVSALDIRESLKIKMADLALVRSSDLNEQLSCQFIAAENCSKHEDLQKTVSAIQLFLVVLRNSLSDTVAENLWKLIHKYIRLAPGNEADDKVYKSMLDLCVTCIRFSQPHAINGLSYALETDHHHSFQLLLHDSQISLDKLFLICQCMMQLLSNELSDDSMNWYGKFFMQLSAVAKTHFELRQLQHVRCILCMLRFVSERNLKFSNAQLMSYSQHFIQLSSNLRTSTQTGSEWQRDCLYIICQLQIHLIYQEPKASSKASIPNDVGASYKVLRYFLTLCGHGDSEVRALSWVSLANWITICGSQVAEILPRLDFLPGGLPACCLTTLTDAHEMMLIRELAGRVFILLMPLIGAESSLELLRKHDLLKTAYNSLKAIHDTPWMFKKIVGERHSCEVISCYVAICTKMVAMKPEWCAALCGHSLMSGLSDVMKKLKSQASCSIPLVELCASQICELYSMCYTNNFEFLKMTICRDSVFLQNYLTLINDVLSLECPEYMVIPLLKMFLIFCTDSNSNSFLIEQIKNKPSLFMDFFLFGLHVKLINSPFQRFTLSALSLVFTKAQLAAYDISMLSELEKFELAFSDPDIAKDGKQEFESKKKQSVSQCIYDESSDNSDDNKQRPNHAIQATNAAIIIFHRLDQLFDRYYLSKALNFLELPAVGQVQVCEALGELLKASTWAVKAAGESKLLGKVVHILDDFLNDEKIGNAAVYVKRVGPHKAQSIISNLLVLINMLSQWHSSPNSEIIQTSMAANIAKILIRIWPWLSHSYHLKKVTVQLIMFLTEHSFEMCKQISLLQSGHAQSLLHLMARVADFETTKKEIPNKEPSLNMVPALRVMVNCCCCTEGRLSLSKMNLLDMFDTILPANPCSTHLKVRPPVLIAWLGFWEVFSRYDVGGKACHLQSLINTIRRSPPLSHKRILCLRILRNMCFFNGNRPRLVELADFINLLRDILEQRVQKAPTSEKNGLNSFEEHRLAVLMLWKLFGFGAKYKGMLRGTKLFKLLIGLRVEMSVVFSEEENKYAGVPYANDLAKLLEKLMESMRQ</sequence>
<keyword id="KW-0963">Cytoplasm</keyword>
<keyword id="KW-0206">Cytoskeleton</keyword>
<keyword id="KW-1185">Reference proteome</keyword>
<name>RTTN_DROME</name>
<organism>
    <name type="scientific">Drosophila melanogaster</name>
    <name type="common">Fruit fly</name>
    <dbReference type="NCBI Taxonomy" id="7227"/>
    <lineage>
        <taxon>Eukaryota</taxon>
        <taxon>Metazoa</taxon>
        <taxon>Ecdysozoa</taxon>
        <taxon>Arthropoda</taxon>
        <taxon>Hexapoda</taxon>
        <taxon>Insecta</taxon>
        <taxon>Pterygota</taxon>
        <taxon>Neoptera</taxon>
        <taxon>Endopterygota</taxon>
        <taxon>Diptera</taxon>
        <taxon>Brachycera</taxon>
        <taxon>Muscomorpha</taxon>
        <taxon>Ephydroidea</taxon>
        <taxon>Drosophilidae</taxon>
        <taxon>Drosophila</taxon>
        <taxon>Sophophora</taxon>
    </lineage>
</organism>
<dbReference type="EMBL" id="AE013599">
    <property type="protein sequence ID" value="AAF58528.2"/>
    <property type="molecule type" value="Genomic_DNA"/>
</dbReference>
<dbReference type="RefSeq" id="NP_610765.1">
    <property type="nucleotide sequence ID" value="NM_136921.2"/>
</dbReference>
<dbReference type="SMR" id="A1Z8X3"/>
<dbReference type="FunCoup" id="A1Z8X3">
    <property type="interactions" value="7"/>
</dbReference>
<dbReference type="IntAct" id="A1Z8X3">
    <property type="interactions" value="2"/>
</dbReference>
<dbReference type="STRING" id="7227.FBpp0087015"/>
<dbReference type="PaxDb" id="7227-FBpp0087015"/>
<dbReference type="EnsemblMetazoa" id="FBtr0087904">
    <property type="protein sequence ID" value="FBpp0087015"/>
    <property type="gene ID" value="FBgn0266111"/>
</dbReference>
<dbReference type="GeneID" id="36341"/>
<dbReference type="KEGG" id="dme:Dmel_CG13162"/>
<dbReference type="UCSC" id="CG13162-RA">
    <property type="organism name" value="d. melanogaster"/>
</dbReference>
<dbReference type="AGR" id="FB:FBgn0266111"/>
<dbReference type="CTD" id="36341"/>
<dbReference type="FlyBase" id="FBgn0266111">
    <property type="gene designation" value="ana3"/>
</dbReference>
<dbReference type="VEuPathDB" id="VectorBase:FBgn0266111"/>
<dbReference type="eggNOG" id="ENOG502QPM7">
    <property type="taxonomic scope" value="Eukaryota"/>
</dbReference>
<dbReference type="GeneTree" id="ENSGT00640000091535"/>
<dbReference type="HOGENOM" id="CLU_232193_0_0_1"/>
<dbReference type="InParanoid" id="A1Z8X3"/>
<dbReference type="OMA" id="MINCCSC"/>
<dbReference type="OrthoDB" id="428850at2759"/>
<dbReference type="PhylomeDB" id="A1Z8X3"/>
<dbReference type="BioGRID-ORCS" id="36341">
    <property type="hits" value="0 hits in 1 CRISPR screen"/>
</dbReference>
<dbReference type="GenomeRNAi" id="36341"/>
<dbReference type="PRO" id="PR:A1Z8X3"/>
<dbReference type="Proteomes" id="UP000000803">
    <property type="component" value="Chromosome 2R"/>
</dbReference>
<dbReference type="Bgee" id="FBgn0266111">
    <property type="expression patterns" value="Expressed in cleaving embryo and 23 other cell types or tissues"/>
</dbReference>
<dbReference type="GO" id="GO:0005814">
    <property type="term" value="C:centriole"/>
    <property type="evidence" value="ECO:0000314"/>
    <property type="project" value="UniProtKB"/>
</dbReference>
<dbReference type="GO" id="GO:0005813">
    <property type="term" value="C:centrosome"/>
    <property type="evidence" value="ECO:0007669"/>
    <property type="project" value="InterPro"/>
</dbReference>
<dbReference type="GO" id="GO:0036064">
    <property type="term" value="C:ciliary basal body"/>
    <property type="evidence" value="ECO:0000314"/>
    <property type="project" value="FlyBase"/>
</dbReference>
<dbReference type="GO" id="GO:0005737">
    <property type="term" value="C:cytoplasm"/>
    <property type="evidence" value="ECO:0007669"/>
    <property type="project" value="UniProtKB-KW"/>
</dbReference>
<dbReference type="GO" id="GO:0061823">
    <property type="term" value="C:ring centriole"/>
    <property type="evidence" value="ECO:0000314"/>
    <property type="project" value="UniProtKB"/>
</dbReference>
<dbReference type="GO" id="GO:0098534">
    <property type="term" value="P:centriole assembly"/>
    <property type="evidence" value="ECO:0000315"/>
    <property type="project" value="UniProtKB"/>
</dbReference>
<dbReference type="GO" id="GO:0007099">
    <property type="term" value="P:centriole replication"/>
    <property type="evidence" value="ECO:0000315"/>
    <property type="project" value="FlyBase"/>
</dbReference>
<dbReference type="GO" id="GO:0010457">
    <property type="term" value="P:centriole-centriole cohesion"/>
    <property type="evidence" value="ECO:0000315"/>
    <property type="project" value="FlyBase"/>
</dbReference>
<dbReference type="GO" id="GO:0007098">
    <property type="term" value="P:centrosome cycle"/>
    <property type="evidence" value="ECO:0000315"/>
    <property type="project" value="FlyBase"/>
</dbReference>
<dbReference type="GO" id="GO:0032053">
    <property type="term" value="P:ciliary basal body organization"/>
    <property type="evidence" value="ECO:0000315"/>
    <property type="project" value="FlyBase"/>
</dbReference>
<dbReference type="InterPro" id="IPR030791">
    <property type="entry name" value="Rotatin"/>
</dbReference>
<dbReference type="InterPro" id="IPR029249">
    <property type="entry name" value="Rotatin_N"/>
</dbReference>
<dbReference type="PANTHER" id="PTHR31691">
    <property type="entry name" value="ROTATIN"/>
    <property type="match status" value="1"/>
</dbReference>
<dbReference type="PANTHER" id="PTHR31691:SF1">
    <property type="entry name" value="ROTATIN"/>
    <property type="match status" value="1"/>
</dbReference>
<dbReference type="Pfam" id="PF14726">
    <property type="entry name" value="RTTN_N"/>
    <property type="match status" value="1"/>
</dbReference>
<proteinExistence type="evidence at protein level"/>
<reference key="1">
    <citation type="journal article" date="2000" name="Science">
        <title>The genome sequence of Drosophila melanogaster.</title>
        <authorList>
            <person name="Adams M.D."/>
            <person name="Celniker S.E."/>
            <person name="Holt R.A."/>
            <person name="Evans C.A."/>
            <person name="Gocayne J.D."/>
            <person name="Amanatides P.G."/>
            <person name="Scherer S.E."/>
            <person name="Li P.W."/>
            <person name="Hoskins R.A."/>
            <person name="Galle R.F."/>
            <person name="George R.A."/>
            <person name="Lewis S.E."/>
            <person name="Richards S."/>
            <person name="Ashburner M."/>
            <person name="Henderson S.N."/>
            <person name="Sutton G.G."/>
            <person name="Wortman J.R."/>
            <person name="Yandell M.D."/>
            <person name="Zhang Q."/>
            <person name="Chen L.X."/>
            <person name="Brandon R.C."/>
            <person name="Rogers Y.-H.C."/>
            <person name="Blazej R.G."/>
            <person name="Champe M."/>
            <person name="Pfeiffer B.D."/>
            <person name="Wan K.H."/>
            <person name="Doyle C."/>
            <person name="Baxter E.G."/>
            <person name="Helt G."/>
            <person name="Nelson C.R."/>
            <person name="Miklos G.L.G."/>
            <person name="Abril J.F."/>
            <person name="Agbayani A."/>
            <person name="An H.-J."/>
            <person name="Andrews-Pfannkoch C."/>
            <person name="Baldwin D."/>
            <person name="Ballew R.M."/>
            <person name="Basu A."/>
            <person name="Baxendale J."/>
            <person name="Bayraktaroglu L."/>
            <person name="Beasley E.M."/>
            <person name="Beeson K.Y."/>
            <person name="Benos P.V."/>
            <person name="Berman B.P."/>
            <person name="Bhandari D."/>
            <person name="Bolshakov S."/>
            <person name="Borkova D."/>
            <person name="Botchan M.R."/>
            <person name="Bouck J."/>
            <person name="Brokstein P."/>
            <person name="Brottier P."/>
            <person name="Burtis K.C."/>
            <person name="Busam D.A."/>
            <person name="Butler H."/>
            <person name="Cadieu E."/>
            <person name="Center A."/>
            <person name="Chandra I."/>
            <person name="Cherry J.M."/>
            <person name="Cawley S."/>
            <person name="Dahlke C."/>
            <person name="Davenport L.B."/>
            <person name="Davies P."/>
            <person name="de Pablos B."/>
            <person name="Delcher A."/>
            <person name="Deng Z."/>
            <person name="Mays A.D."/>
            <person name="Dew I."/>
            <person name="Dietz S.M."/>
            <person name="Dodson K."/>
            <person name="Doup L.E."/>
            <person name="Downes M."/>
            <person name="Dugan-Rocha S."/>
            <person name="Dunkov B.C."/>
            <person name="Dunn P."/>
            <person name="Durbin K.J."/>
            <person name="Evangelista C.C."/>
            <person name="Ferraz C."/>
            <person name="Ferriera S."/>
            <person name="Fleischmann W."/>
            <person name="Fosler C."/>
            <person name="Gabrielian A.E."/>
            <person name="Garg N.S."/>
            <person name="Gelbart W.M."/>
            <person name="Glasser K."/>
            <person name="Glodek A."/>
            <person name="Gong F."/>
            <person name="Gorrell J.H."/>
            <person name="Gu Z."/>
            <person name="Guan P."/>
            <person name="Harris M."/>
            <person name="Harris N.L."/>
            <person name="Harvey D.A."/>
            <person name="Heiman T.J."/>
            <person name="Hernandez J.R."/>
            <person name="Houck J."/>
            <person name="Hostin D."/>
            <person name="Houston K.A."/>
            <person name="Howland T.J."/>
            <person name="Wei M.-H."/>
            <person name="Ibegwam C."/>
            <person name="Jalali M."/>
            <person name="Kalush F."/>
            <person name="Karpen G.H."/>
            <person name="Ke Z."/>
            <person name="Kennison J.A."/>
            <person name="Ketchum K.A."/>
            <person name="Kimmel B.E."/>
            <person name="Kodira C.D."/>
            <person name="Kraft C.L."/>
            <person name="Kravitz S."/>
            <person name="Kulp D."/>
            <person name="Lai Z."/>
            <person name="Lasko P."/>
            <person name="Lei Y."/>
            <person name="Levitsky A.A."/>
            <person name="Li J.H."/>
            <person name="Li Z."/>
            <person name="Liang Y."/>
            <person name="Lin X."/>
            <person name="Liu X."/>
            <person name="Mattei B."/>
            <person name="McIntosh T.C."/>
            <person name="McLeod M.P."/>
            <person name="McPherson D."/>
            <person name="Merkulov G."/>
            <person name="Milshina N.V."/>
            <person name="Mobarry C."/>
            <person name="Morris J."/>
            <person name="Moshrefi A."/>
            <person name="Mount S.M."/>
            <person name="Moy M."/>
            <person name="Murphy B."/>
            <person name="Murphy L."/>
            <person name="Muzny D.M."/>
            <person name="Nelson D.L."/>
            <person name="Nelson D.R."/>
            <person name="Nelson K.A."/>
            <person name="Nixon K."/>
            <person name="Nusskern D.R."/>
            <person name="Pacleb J.M."/>
            <person name="Palazzolo M."/>
            <person name="Pittman G.S."/>
            <person name="Pan S."/>
            <person name="Pollard J."/>
            <person name="Puri V."/>
            <person name="Reese M.G."/>
            <person name="Reinert K."/>
            <person name="Remington K."/>
            <person name="Saunders R.D.C."/>
            <person name="Scheeler F."/>
            <person name="Shen H."/>
            <person name="Shue B.C."/>
            <person name="Siden-Kiamos I."/>
            <person name="Simpson M."/>
            <person name="Skupski M.P."/>
            <person name="Smith T.J."/>
            <person name="Spier E."/>
            <person name="Spradling A.C."/>
            <person name="Stapleton M."/>
            <person name="Strong R."/>
            <person name="Sun E."/>
            <person name="Svirskas R."/>
            <person name="Tector C."/>
            <person name="Turner R."/>
            <person name="Venter E."/>
            <person name="Wang A.H."/>
            <person name="Wang X."/>
            <person name="Wang Z.-Y."/>
            <person name="Wassarman D.A."/>
            <person name="Weinstock G.M."/>
            <person name="Weissenbach J."/>
            <person name="Williams S.M."/>
            <person name="Woodage T."/>
            <person name="Worley K.C."/>
            <person name="Wu D."/>
            <person name="Yang S."/>
            <person name="Yao Q.A."/>
            <person name="Ye J."/>
            <person name="Yeh R.-F."/>
            <person name="Zaveri J.S."/>
            <person name="Zhan M."/>
            <person name="Zhang G."/>
            <person name="Zhao Q."/>
            <person name="Zheng L."/>
            <person name="Zheng X.H."/>
            <person name="Zhong F.N."/>
            <person name="Zhong W."/>
            <person name="Zhou X."/>
            <person name="Zhu S.C."/>
            <person name="Zhu X."/>
            <person name="Smith H.O."/>
            <person name="Gibbs R.A."/>
            <person name="Myers E.W."/>
            <person name="Rubin G.M."/>
            <person name="Venter J.C."/>
        </authorList>
    </citation>
    <scope>NUCLEOTIDE SEQUENCE [LARGE SCALE GENOMIC DNA]</scope>
    <source>
        <strain>Berkeley</strain>
    </source>
</reference>
<reference key="2">
    <citation type="journal article" date="2002" name="Genome Biol.">
        <title>Annotation of the Drosophila melanogaster euchromatic genome: a systematic review.</title>
        <authorList>
            <person name="Misra S."/>
            <person name="Crosby M.A."/>
            <person name="Mungall C.J."/>
            <person name="Matthews B.B."/>
            <person name="Campbell K.S."/>
            <person name="Hradecky P."/>
            <person name="Huang Y."/>
            <person name="Kaminker J.S."/>
            <person name="Millburn G.H."/>
            <person name="Prochnik S.E."/>
            <person name="Smith C.D."/>
            <person name="Tupy J.L."/>
            <person name="Whitfield E.J."/>
            <person name="Bayraktaroglu L."/>
            <person name="Berman B.P."/>
            <person name="Bettencourt B.R."/>
            <person name="Celniker S.E."/>
            <person name="de Grey A.D.N.J."/>
            <person name="Drysdale R.A."/>
            <person name="Harris N.L."/>
            <person name="Richter J."/>
            <person name="Russo S."/>
            <person name="Schroeder A.J."/>
            <person name="Shu S.Q."/>
            <person name="Stapleton M."/>
            <person name="Yamada C."/>
            <person name="Ashburner M."/>
            <person name="Gelbart W.M."/>
            <person name="Rubin G.M."/>
            <person name="Lewis S.E."/>
        </authorList>
    </citation>
    <scope>GENOME REANNOTATION</scope>
    <source>
        <strain>Berkeley</strain>
    </source>
</reference>
<reference key="3">
    <citation type="journal article" date="2009" name="J. Cell Biol.">
        <title>Ana3 is a conserved protein required for the structural integrity of centrioles and basal bodies.</title>
        <authorList>
            <person name="Stevens N.R."/>
            <person name="Dobbelaere J."/>
            <person name="Wainman A."/>
            <person name="Gergely F."/>
            <person name="Raff J.W."/>
        </authorList>
    </citation>
    <scope>SUBCELLULAR LOCATION</scope>
    <scope>FUNCTION</scope>
</reference>
<reference key="4">
    <citation type="journal article" date="2020" name="J. Cell Biol.">
        <title>Tissue specific requirement of Drosophila Rcd4 for centriole duplication and ciliogenesis.</title>
        <authorList>
            <person name="Panda P."/>
            <person name="Kovacs L."/>
            <person name="Dzhindzhev N."/>
            <person name="Fatalska A."/>
            <person name="Persico V."/>
            <person name="Geymonat M."/>
            <person name="Riparbelli M.G."/>
            <person name="Callaini G."/>
            <person name="Glover D.M."/>
        </authorList>
    </citation>
    <scope>FUNCTION</scope>
    <scope>SUBCELLULAR LOCATION</scope>
    <scope>INTERACTION WITH RCD4</scope>
</reference>
<gene>
    <name evidence="5" type="primary">ana3</name>
    <name evidence="5" type="ORF">CG13162</name>
</gene>
<protein>
    <recommendedName>
        <fullName evidence="4">Protein rotatin homolog</fullName>
    </recommendedName>
    <alternativeName>
        <fullName evidence="5">Anastral spindle 3</fullName>
    </alternativeName>
</protein>
<comment type="function">
    <text evidence="2 3">Participes in the structural integrity of both centrioles and basal bodies and in centriole cohesion (PubMed:19948479). Participates in the later stages of centriole assembly through the interaction with Rcd4 leading to the centriole to centrosome conversion (PubMed:32543652).</text>
</comment>
<comment type="subunit">
    <text evidence="3">Interacts with Rcd4;this complex is recruited to daughter centrioles before their conversion to centrosomes.</text>
</comment>
<comment type="subcellular location">
    <subcellularLocation>
        <location evidence="2 3">Cytoplasm</location>
        <location evidence="2 3">Cytoskeleton</location>
        <location evidence="2 3">Microtubule organizing center</location>
        <location evidence="2 3">Centrosome</location>
        <location evidence="2 3">Centriole</location>
    </subcellularLocation>
    <text evidence="2 3">Associated with the daughter centriole on mitotic entry (PubMed:32543652). Ana3 recruitment to the procentriole in interphase precedes the Rcd4 one (PubMed:32543652). Localizes to the basal bodies (PubMed:19948479).</text>
</comment>
<comment type="similarity">
    <text evidence="4">Belongs to the rotatin family.</text>
</comment>
<accession>A1Z8X3</accession>